<evidence type="ECO:0000255" key="1">
    <source>
        <dbReference type="HAMAP-Rule" id="MF_01246"/>
    </source>
</evidence>
<dbReference type="EC" id="3.5.1.105" evidence="1"/>
<dbReference type="EMBL" id="CP000950">
    <property type="protein sequence ID" value="ACA67446.1"/>
    <property type="molecule type" value="Genomic_DNA"/>
</dbReference>
<dbReference type="RefSeq" id="WP_002212244.1">
    <property type="nucleotide sequence ID" value="NZ_CP009792.1"/>
</dbReference>
<dbReference type="SMR" id="B1JR86"/>
<dbReference type="GeneID" id="57976011"/>
<dbReference type="KEGG" id="ypy:YPK_1148"/>
<dbReference type="PATRIC" id="fig|502800.11.peg.1783"/>
<dbReference type="UniPathway" id="UPA00349"/>
<dbReference type="GO" id="GO:0005737">
    <property type="term" value="C:cytoplasm"/>
    <property type="evidence" value="ECO:0007669"/>
    <property type="project" value="UniProtKB-SubCell"/>
</dbReference>
<dbReference type="GO" id="GO:0036311">
    <property type="term" value="F:chitin disaccharide deacetylase activity"/>
    <property type="evidence" value="ECO:0007669"/>
    <property type="project" value="UniProtKB-UniRule"/>
</dbReference>
<dbReference type="GO" id="GO:0019213">
    <property type="term" value="F:deacetylase activity"/>
    <property type="evidence" value="ECO:0007669"/>
    <property type="project" value="TreeGrafter"/>
</dbReference>
<dbReference type="GO" id="GO:0046872">
    <property type="term" value="F:metal ion binding"/>
    <property type="evidence" value="ECO:0007669"/>
    <property type="project" value="UniProtKB-KW"/>
</dbReference>
<dbReference type="GO" id="GO:0006032">
    <property type="term" value="P:chitin catabolic process"/>
    <property type="evidence" value="ECO:0007669"/>
    <property type="project" value="UniProtKB-UniPathway"/>
</dbReference>
<dbReference type="GO" id="GO:0052777">
    <property type="term" value="P:diacetylchitobiose catabolic process"/>
    <property type="evidence" value="ECO:0007669"/>
    <property type="project" value="UniProtKB-UniRule"/>
</dbReference>
<dbReference type="GO" id="GO:0000272">
    <property type="term" value="P:polysaccharide catabolic process"/>
    <property type="evidence" value="ECO:0007669"/>
    <property type="project" value="UniProtKB-UniRule"/>
</dbReference>
<dbReference type="CDD" id="cd10803">
    <property type="entry name" value="YdjC_EF3048_like"/>
    <property type="match status" value="1"/>
</dbReference>
<dbReference type="FunFam" id="3.20.20.370:FF:000001">
    <property type="entry name" value="Chitooligosaccharide deacetylase"/>
    <property type="match status" value="1"/>
</dbReference>
<dbReference type="Gene3D" id="3.20.20.370">
    <property type="entry name" value="Glycoside hydrolase/deacetylase"/>
    <property type="match status" value="1"/>
</dbReference>
<dbReference type="HAMAP" id="MF_01246">
    <property type="entry name" value="COD"/>
    <property type="match status" value="1"/>
</dbReference>
<dbReference type="InterPro" id="IPR022948">
    <property type="entry name" value="COD_ChbG_bac"/>
</dbReference>
<dbReference type="InterPro" id="IPR011330">
    <property type="entry name" value="Glyco_hydro/deAcase_b/a-brl"/>
</dbReference>
<dbReference type="InterPro" id="IPR006879">
    <property type="entry name" value="YdjC-like"/>
</dbReference>
<dbReference type="NCBIfam" id="NF002559">
    <property type="entry name" value="PRK02134.1"/>
    <property type="match status" value="1"/>
</dbReference>
<dbReference type="PANTHER" id="PTHR31609:SF1">
    <property type="entry name" value="CARBOHYDRATE DEACETYLASE"/>
    <property type="match status" value="1"/>
</dbReference>
<dbReference type="PANTHER" id="PTHR31609">
    <property type="entry name" value="YDJC DEACETYLASE FAMILY MEMBER"/>
    <property type="match status" value="1"/>
</dbReference>
<dbReference type="Pfam" id="PF04794">
    <property type="entry name" value="YdjC"/>
    <property type="match status" value="1"/>
</dbReference>
<dbReference type="SUPFAM" id="SSF88713">
    <property type="entry name" value="Glycoside hydrolase/deacetylase"/>
    <property type="match status" value="1"/>
</dbReference>
<comment type="function">
    <text evidence="1">Involved in the degradation of chitin. ChbG is essential for growth on the acetylated chitooligosaccharides chitobiose and chitotriose but is dispensable for growth on cellobiose and chitosan dimer, the deacetylated form of chitobiose. Deacetylation of chitobiose-6-P and chitotriose-6-P is necessary for both the activation of the chb promoter by the regulatory protein ChbR and the hydrolysis of phosphorylated beta-glucosides by the phospho-beta-glucosidase ChbF. Catalyzes the removal of only one acetyl group from chitobiose-6-P to yield monoacetylchitobiose-6-P, the inducer of ChbR and the substrate of ChbF.</text>
</comment>
<comment type="catalytic activity">
    <reaction evidence="1">
        <text>N,N'-diacetylchitobiose + H2O = N-acetyl-beta-D-glucosaminyl-(1-&gt;4)-D-glucosamine + acetate</text>
        <dbReference type="Rhea" id="RHEA:27469"/>
        <dbReference type="ChEBI" id="CHEBI:15377"/>
        <dbReference type="ChEBI" id="CHEBI:28681"/>
        <dbReference type="ChEBI" id="CHEBI:30089"/>
        <dbReference type="ChEBI" id="CHEBI:59910"/>
        <dbReference type="EC" id="3.5.1.105"/>
    </reaction>
</comment>
<comment type="catalytic activity">
    <reaction evidence="1">
        <text>diacetylchitobiose-6'-phosphate + H2O = N'-monoacetylchitobiose-6'-phosphate + acetate</text>
        <dbReference type="Rhea" id="RHEA:35083"/>
        <dbReference type="ChEBI" id="CHEBI:15377"/>
        <dbReference type="ChEBI" id="CHEBI:30089"/>
        <dbReference type="ChEBI" id="CHEBI:64883"/>
        <dbReference type="ChEBI" id="CHEBI:71315"/>
    </reaction>
</comment>
<comment type="cofactor">
    <cofactor evidence="1">
        <name>Mg(2+)</name>
        <dbReference type="ChEBI" id="CHEBI:18420"/>
    </cofactor>
</comment>
<comment type="pathway">
    <text evidence="1">Glycan degradation; chitin degradation.</text>
</comment>
<comment type="subunit">
    <text evidence="1">Homodimer.</text>
</comment>
<comment type="subcellular location">
    <subcellularLocation>
        <location evidence="1">Cytoplasm</location>
    </subcellularLocation>
</comment>
<comment type="similarity">
    <text evidence="1">Belongs to the YdjC deacetylase family. ChbG subfamily.</text>
</comment>
<accession>B1JR86</accession>
<gene>
    <name evidence="1" type="primary">chbG</name>
    <name type="ordered locus">YPK_1148</name>
</gene>
<reference key="1">
    <citation type="submission" date="2008-02" db="EMBL/GenBank/DDBJ databases">
        <title>Complete sequence of Yersinia pseudotuberculosis YPIII.</title>
        <authorList>
            <consortium name="US DOE Joint Genome Institute"/>
            <person name="Copeland A."/>
            <person name="Lucas S."/>
            <person name="Lapidus A."/>
            <person name="Glavina del Rio T."/>
            <person name="Dalin E."/>
            <person name="Tice H."/>
            <person name="Bruce D."/>
            <person name="Goodwin L."/>
            <person name="Pitluck S."/>
            <person name="Munk A.C."/>
            <person name="Brettin T."/>
            <person name="Detter J.C."/>
            <person name="Han C."/>
            <person name="Tapia R."/>
            <person name="Schmutz J."/>
            <person name="Larimer F."/>
            <person name="Land M."/>
            <person name="Hauser L."/>
            <person name="Challacombe J.F."/>
            <person name="Green L."/>
            <person name="Lindler L.E."/>
            <person name="Nikolich M.P."/>
            <person name="Richardson P."/>
        </authorList>
    </citation>
    <scope>NUCLEOTIDE SEQUENCE [LARGE SCALE GENOMIC DNA]</scope>
    <source>
        <strain>YPIII</strain>
    </source>
</reference>
<organism>
    <name type="scientific">Yersinia pseudotuberculosis serotype O:3 (strain YPIII)</name>
    <dbReference type="NCBI Taxonomy" id="502800"/>
    <lineage>
        <taxon>Bacteria</taxon>
        <taxon>Pseudomonadati</taxon>
        <taxon>Pseudomonadota</taxon>
        <taxon>Gammaproteobacteria</taxon>
        <taxon>Enterobacterales</taxon>
        <taxon>Yersiniaceae</taxon>
        <taxon>Yersinia</taxon>
    </lineage>
</organism>
<keyword id="KW-0119">Carbohydrate metabolism</keyword>
<keyword id="KW-0146">Chitin degradation</keyword>
<keyword id="KW-0963">Cytoplasm</keyword>
<keyword id="KW-0378">Hydrolase</keyword>
<keyword id="KW-0460">Magnesium</keyword>
<keyword id="KW-0479">Metal-binding</keyword>
<keyword id="KW-0624">Polysaccharide degradation</keyword>
<protein>
    <recommendedName>
        <fullName evidence="1">Chitooligosaccharide deacetylase</fullName>
        <shortName evidence="1">COD</shortName>
        <ecNumber evidence="1">3.5.1.105</ecNumber>
    </recommendedName>
    <alternativeName>
        <fullName evidence="1">Chitin disaccharide deacetylase</fullName>
    </alternativeName>
    <alternativeName>
        <fullName evidence="1">Chitobiose deacetylase</fullName>
    </alternativeName>
    <alternativeName>
        <fullName evidence="1">Chitobiose-6P deacetylase</fullName>
    </alternativeName>
    <alternativeName>
        <fullName evidence="1">Chitotriose deacetylase</fullName>
    </alternativeName>
    <alternativeName>
        <fullName evidence="1">Chitotriose-6P deacetylase</fullName>
    </alternativeName>
</protein>
<sequence>MEKLLIVNADDFGLCKGQNYGIIDAFRNGVVSSTTAMMNSVDINHAAELSAQYPALPVGMHFVLTFGRPLTAMPSLTDANGELGKWLWQRAGAGTLDLNEIAQELECQFERFSAVFGRPPTHIDSHHHVHMLPQIYPLVAAFAREKSLPLRIDRHEVQQHGLTLDNPRSSEWFNAGFYGENLSEPSFLQLLEHADQQGVNSLEIMCHPAFIDQTLMTSGYCYPRLTELAILTSPTLKPAIAQRGYRLGSFLDC</sequence>
<proteinExistence type="inferred from homology"/>
<feature type="chain" id="PRO_1000139842" description="Chitooligosaccharide deacetylase">
    <location>
        <begin position="1"/>
        <end position="253"/>
    </location>
</feature>
<feature type="binding site" evidence="1">
    <location>
        <position position="61"/>
    </location>
    <ligand>
        <name>Mg(2+)</name>
        <dbReference type="ChEBI" id="CHEBI:18420"/>
    </ligand>
</feature>
<feature type="binding site" evidence="1">
    <location>
        <position position="126"/>
    </location>
    <ligand>
        <name>Mg(2+)</name>
        <dbReference type="ChEBI" id="CHEBI:18420"/>
    </ligand>
</feature>
<name>CHBG_YERPY</name>